<organism>
    <name type="scientific">Vibrio vulnificus (strain YJ016)</name>
    <dbReference type="NCBI Taxonomy" id="196600"/>
    <lineage>
        <taxon>Bacteria</taxon>
        <taxon>Pseudomonadati</taxon>
        <taxon>Pseudomonadota</taxon>
        <taxon>Gammaproteobacteria</taxon>
        <taxon>Vibrionales</taxon>
        <taxon>Vibrionaceae</taxon>
        <taxon>Vibrio</taxon>
    </lineage>
</organism>
<evidence type="ECO:0000255" key="1">
    <source>
        <dbReference type="HAMAP-Rule" id="MF_00709"/>
    </source>
</evidence>
<dbReference type="EMBL" id="BA000037">
    <property type="protein sequence ID" value="BAC95864.1"/>
    <property type="molecule type" value="Genomic_DNA"/>
</dbReference>
<dbReference type="RefSeq" id="WP_011151344.1">
    <property type="nucleotide sequence ID" value="NC_005139.1"/>
</dbReference>
<dbReference type="SMR" id="Q7MGX4"/>
<dbReference type="STRING" id="672.VV93_v1c28230"/>
<dbReference type="KEGG" id="vvy:VV3100"/>
<dbReference type="eggNOG" id="COG3080">
    <property type="taxonomic scope" value="Bacteria"/>
</dbReference>
<dbReference type="HOGENOM" id="CLU_168367_0_0_6"/>
<dbReference type="Proteomes" id="UP000002675">
    <property type="component" value="Chromosome I"/>
</dbReference>
<dbReference type="GO" id="GO:0045283">
    <property type="term" value="C:fumarate reductase complex"/>
    <property type="evidence" value="ECO:0007669"/>
    <property type="project" value="UniProtKB-UniRule"/>
</dbReference>
<dbReference type="GO" id="GO:0005886">
    <property type="term" value="C:plasma membrane"/>
    <property type="evidence" value="ECO:0007669"/>
    <property type="project" value="UniProtKB-SubCell"/>
</dbReference>
<dbReference type="GO" id="GO:0000104">
    <property type="term" value="F:succinate dehydrogenase activity"/>
    <property type="evidence" value="ECO:0007669"/>
    <property type="project" value="UniProtKB-UniRule"/>
</dbReference>
<dbReference type="GO" id="GO:0006106">
    <property type="term" value="P:fumarate metabolic process"/>
    <property type="evidence" value="ECO:0007669"/>
    <property type="project" value="InterPro"/>
</dbReference>
<dbReference type="CDD" id="cd00547">
    <property type="entry name" value="QFR_TypeD_subunitD"/>
    <property type="match status" value="1"/>
</dbReference>
<dbReference type="Gene3D" id="1.20.1300.10">
    <property type="entry name" value="Fumarate reductase/succinate dehydrogenase, transmembrane subunit"/>
    <property type="match status" value="1"/>
</dbReference>
<dbReference type="HAMAP" id="MF_00709">
    <property type="entry name" value="Fumarate_red_D"/>
    <property type="match status" value="1"/>
</dbReference>
<dbReference type="InterPro" id="IPR003418">
    <property type="entry name" value="Fumarate_red_D"/>
</dbReference>
<dbReference type="InterPro" id="IPR034804">
    <property type="entry name" value="SQR/QFR_C/D"/>
</dbReference>
<dbReference type="NCBIfam" id="NF003977">
    <property type="entry name" value="PRK05470.1-1"/>
    <property type="match status" value="1"/>
</dbReference>
<dbReference type="Pfam" id="PF02313">
    <property type="entry name" value="Fumarate_red_D"/>
    <property type="match status" value="1"/>
</dbReference>
<dbReference type="PIRSF" id="PIRSF000179">
    <property type="entry name" value="FrdD"/>
    <property type="match status" value="1"/>
</dbReference>
<dbReference type="SUPFAM" id="SSF81343">
    <property type="entry name" value="Fumarate reductase respiratory complex transmembrane subunits"/>
    <property type="match status" value="1"/>
</dbReference>
<proteinExistence type="inferred from homology"/>
<reference key="1">
    <citation type="journal article" date="2003" name="Genome Res.">
        <title>Comparative genome analysis of Vibrio vulnificus, a marine pathogen.</title>
        <authorList>
            <person name="Chen C.-Y."/>
            <person name="Wu K.-M."/>
            <person name="Chang Y.-C."/>
            <person name="Chang C.-H."/>
            <person name="Tsai H.-C."/>
            <person name="Liao T.-L."/>
            <person name="Liu Y.-M."/>
            <person name="Chen H.-J."/>
            <person name="Shen A.B.-T."/>
            <person name="Li J.-C."/>
            <person name="Su T.-L."/>
            <person name="Shao C.-P."/>
            <person name="Lee C.-T."/>
            <person name="Hor L.-I."/>
            <person name="Tsai S.-F."/>
        </authorList>
    </citation>
    <scope>NUCLEOTIDE SEQUENCE [LARGE SCALE GENOMIC DNA]</scope>
    <source>
        <strain>YJ016</strain>
    </source>
</reference>
<keyword id="KW-0997">Cell inner membrane</keyword>
<keyword id="KW-1003">Cell membrane</keyword>
<keyword id="KW-0472">Membrane</keyword>
<keyword id="KW-0812">Transmembrane</keyword>
<keyword id="KW-1133">Transmembrane helix</keyword>
<feature type="chain" id="PRO_0000196557" description="Fumarate reductase subunit D">
    <location>
        <begin position="1"/>
        <end position="125"/>
    </location>
</feature>
<feature type="transmembrane region" description="Helical" evidence="1">
    <location>
        <begin position="30"/>
        <end position="50"/>
    </location>
</feature>
<feature type="transmembrane region" description="Helical" evidence="1">
    <location>
        <begin position="60"/>
        <end position="80"/>
    </location>
</feature>
<feature type="transmembrane region" description="Helical" evidence="1">
    <location>
        <begin position="105"/>
        <end position="125"/>
    </location>
</feature>
<accession>Q7MGX4</accession>
<protein>
    <recommendedName>
        <fullName evidence="1">Fumarate reductase subunit D</fullName>
    </recommendedName>
    <alternativeName>
        <fullName evidence="1">Quinol-fumarate reductase subunit D</fullName>
        <shortName evidence="1">QFR subunit D</shortName>
    </alternativeName>
</protein>
<name>FRDD_VIBVY</name>
<comment type="function">
    <text evidence="1">Anchors the catalytic components of the fumarate reductase complex to the cell membrane, binds quinones.</text>
</comment>
<comment type="subunit">
    <text evidence="1">Part of an enzyme complex containing four subunits: a flavoprotein (FrdA), an iron-sulfur protein (FrdB), and two hydrophobic anchor proteins (FrdC and FrdD).</text>
</comment>
<comment type="subcellular location">
    <subcellularLocation>
        <location evidence="1">Cell inner membrane</location>
        <topology evidence="1">Multi-pass membrane protein</topology>
    </subcellularLocation>
</comment>
<comment type="similarity">
    <text evidence="1">Belongs to the FrdD family.</text>
</comment>
<sequence length="125" mass="13664">MKPNYNVDRAPKRSDEPVWWSLFGAGGTWFAMITPVTVLVLGILVPMGVINAEALSYDRVVSFATSIIGALFIIATLALPMWHAMHRVHHGMHDLKFHTGVVGKIACYAIAGLISALAVVFIFML</sequence>
<gene>
    <name evidence="1" type="primary">frdD</name>
    <name type="ordered locus">VV3100</name>
</gene>